<sequence>MTLLYEGKAKRIFSTNQENELRVEYKDEVTAGNGAKKDTMAGKGRLNNQITSIIFKYLQENGIESHFIKQLSETEQLVKPVKIIPLEVVVRNIASGSITKRLGFENGEVFREPLVEFFYKNDALNDPLITDDHVKLLNIASDEDIEILKSKALKINNVLKQLMDAMNLKLVDFKIEFGKTETGQILLADEISPDTCRIWDKATNANFDKDVYRNNTGSLIETYQIFLNKLEDLK</sequence>
<reference key="1">
    <citation type="journal article" date="2005" name="J. Bacteriol.">
        <title>Insights on evolution of virulence and resistance from the complete genome analysis of an early methicillin-resistant Staphylococcus aureus strain and a biofilm-producing methicillin-resistant Staphylococcus epidermidis strain.</title>
        <authorList>
            <person name="Gill S.R."/>
            <person name="Fouts D.E."/>
            <person name="Archer G.L."/>
            <person name="Mongodin E.F."/>
            <person name="DeBoy R.T."/>
            <person name="Ravel J."/>
            <person name="Paulsen I.T."/>
            <person name="Kolonay J.F."/>
            <person name="Brinkac L.M."/>
            <person name="Beanan M.J."/>
            <person name="Dodson R.J."/>
            <person name="Daugherty S.C."/>
            <person name="Madupu R."/>
            <person name="Angiuoli S.V."/>
            <person name="Durkin A.S."/>
            <person name="Haft D.H."/>
            <person name="Vamathevan J.J."/>
            <person name="Khouri H."/>
            <person name="Utterback T.R."/>
            <person name="Lee C."/>
            <person name="Dimitrov G."/>
            <person name="Jiang L."/>
            <person name="Qin H."/>
            <person name="Weidman J."/>
            <person name="Tran K."/>
            <person name="Kang K.H."/>
            <person name="Hance I.R."/>
            <person name="Nelson K.E."/>
            <person name="Fraser C.M."/>
        </authorList>
    </citation>
    <scope>NUCLEOTIDE SEQUENCE [LARGE SCALE GENOMIC DNA]</scope>
    <source>
        <strain>COL</strain>
    </source>
</reference>
<proteinExistence type="inferred from homology"/>
<accession>Q5HH18</accession>
<name>PUR7_STAAC</name>
<keyword id="KW-0067">ATP-binding</keyword>
<keyword id="KW-0436">Ligase</keyword>
<keyword id="KW-0547">Nucleotide-binding</keyword>
<keyword id="KW-0658">Purine biosynthesis</keyword>
<evidence type="ECO:0000255" key="1">
    <source>
        <dbReference type="HAMAP-Rule" id="MF_00137"/>
    </source>
</evidence>
<comment type="catalytic activity">
    <reaction evidence="1">
        <text>5-amino-1-(5-phospho-D-ribosyl)imidazole-4-carboxylate + L-aspartate + ATP = (2S)-2-[5-amino-1-(5-phospho-beta-D-ribosyl)imidazole-4-carboxamido]succinate + ADP + phosphate + 2 H(+)</text>
        <dbReference type="Rhea" id="RHEA:22628"/>
        <dbReference type="ChEBI" id="CHEBI:15378"/>
        <dbReference type="ChEBI" id="CHEBI:29991"/>
        <dbReference type="ChEBI" id="CHEBI:30616"/>
        <dbReference type="ChEBI" id="CHEBI:43474"/>
        <dbReference type="ChEBI" id="CHEBI:58443"/>
        <dbReference type="ChEBI" id="CHEBI:77657"/>
        <dbReference type="ChEBI" id="CHEBI:456216"/>
        <dbReference type="EC" id="6.3.2.6"/>
    </reaction>
</comment>
<comment type="pathway">
    <text evidence="1">Purine metabolism; IMP biosynthesis via de novo pathway; 5-amino-1-(5-phospho-D-ribosyl)imidazole-4-carboxamide from 5-amino-1-(5-phospho-D-ribosyl)imidazole-4-carboxylate: step 1/2.</text>
</comment>
<comment type="similarity">
    <text evidence="1">Belongs to the SAICAR synthetase family.</text>
</comment>
<gene>
    <name evidence="1" type="primary">purC</name>
    <name type="ordered locus">SACOL1075</name>
</gene>
<organism>
    <name type="scientific">Staphylococcus aureus (strain COL)</name>
    <dbReference type="NCBI Taxonomy" id="93062"/>
    <lineage>
        <taxon>Bacteria</taxon>
        <taxon>Bacillati</taxon>
        <taxon>Bacillota</taxon>
        <taxon>Bacilli</taxon>
        <taxon>Bacillales</taxon>
        <taxon>Staphylococcaceae</taxon>
        <taxon>Staphylococcus</taxon>
    </lineage>
</organism>
<protein>
    <recommendedName>
        <fullName evidence="1">Phosphoribosylaminoimidazole-succinocarboxamide synthase</fullName>
        <ecNumber evidence="1">6.3.2.6</ecNumber>
    </recommendedName>
    <alternativeName>
        <fullName evidence="1">SAICAR synthetase</fullName>
    </alternativeName>
</protein>
<feature type="chain" id="PRO_0000100869" description="Phosphoribosylaminoimidazole-succinocarboxamide synthase">
    <location>
        <begin position="1"/>
        <end position="234"/>
    </location>
</feature>
<dbReference type="EC" id="6.3.2.6" evidence="1"/>
<dbReference type="EMBL" id="CP000046">
    <property type="protein sequence ID" value="AAW37955.1"/>
    <property type="molecule type" value="Genomic_DNA"/>
</dbReference>
<dbReference type="RefSeq" id="WP_000174053.1">
    <property type="nucleotide sequence ID" value="NZ_JBGOFO010000002.1"/>
</dbReference>
<dbReference type="SMR" id="Q5HH18"/>
<dbReference type="KEGG" id="sac:SACOL1075"/>
<dbReference type="HOGENOM" id="CLU_061495_2_0_9"/>
<dbReference type="UniPathway" id="UPA00074">
    <property type="reaction ID" value="UER00131"/>
</dbReference>
<dbReference type="Proteomes" id="UP000000530">
    <property type="component" value="Chromosome"/>
</dbReference>
<dbReference type="GO" id="GO:0005524">
    <property type="term" value="F:ATP binding"/>
    <property type="evidence" value="ECO:0007669"/>
    <property type="project" value="UniProtKB-KW"/>
</dbReference>
<dbReference type="GO" id="GO:0004639">
    <property type="term" value="F:phosphoribosylaminoimidazolesuccinocarboxamide synthase activity"/>
    <property type="evidence" value="ECO:0007669"/>
    <property type="project" value="UniProtKB-UniRule"/>
</dbReference>
<dbReference type="GO" id="GO:0006189">
    <property type="term" value="P:'de novo' IMP biosynthetic process"/>
    <property type="evidence" value="ECO:0007669"/>
    <property type="project" value="UniProtKB-UniRule"/>
</dbReference>
<dbReference type="GO" id="GO:0009236">
    <property type="term" value="P:cobalamin biosynthetic process"/>
    <property type="evidence" value="ECO:0007669"/>
    <property type="project" value="InterPro"/>
</dbReference>
<dbReference type="CDD" id="cd01415">
    <property type="entry name" value="SAICAR_synt_PurC"/>
    <property type="match status" value="1"/>
</dbReference>
<dbReference type="FunFam" id="3.30.200.20:FF:000189">
    <property type="entry name" value="Phosphoribosylaminoimidazole-succinocarboxamide synthase"/>
    <property type="match status" value="1"/>
</dbReference>
<dbReference type="FunFam" id="3.30.470.20:FF:000006">
    <property type="entry name" value="Phosphoribosylaminoimidazole-succinocarboxamide synthase"/>
    <property type="match status" value="1"/>
</dbReference>
<dbReference type="Gene3D" id="3.30.470.20">
    <property type="entry name" value="ATP-grasp fold, B domain"/>
    <property type="match status" value="1"/>
</dbReference>
<dbReference type="Gene3D" id="3.30.200.20">
    <property type="entry name" value="Phosphorylase Kinase, domain 1"/>
    <property type="match status" value="1"/>
</dbReference>
<dbReference type="HAMAP" id="MF_00137">
    <property type="entry name" value="SAICAR_synth"/>
    <property type="match status" value="1"/>
</dbReference>
<dbReference type="InterPro" id="IPR028923">
    <property type="entry name" value="SAICAR_synt/ADE2_N"/>
</dbReference>
<dbReference type="InterPro" id="IPR033934">
    <property type="entry name" value="SAICAR_synt_PurC"/>
</dbReference>
<dbReference type="InterPro" id="IPR001636">
    <property type="entry name" value="SAICAR_synth"/>
</dbReference>
<dbReference type="InterPro" id="IPR050089">
    <property type="entry name" value="SAICAR_synthetase"/>
</dbReference>
<dbReference type="InterPro" id="IPR018236">
    <property type="entry name" value="SAICAR_synthetase_CS"/>
</dbReference>
<dbReference type="NCBIfam" id="TIGR00081">
    <property type="entry name" value="purC"/>
    <property type="match status" value="1"/>
</dbReference>
<dbReference type="PANTHER" id="PTHR43599">
    <property type="entry name" value="MULTIFUNCTIONAL PROTEIN ADE2"/>
    <property type="match status" value="1"/>
</dbReference>
<dbReference type="PANTHER" id="PTHR43599:SF3">
    <property type="entry name" value="SI:DKEY-6E2.2"/>
    <property type="match status" value="1"/>
</dbReference>
<dbReference type="Pfam" id="PF01259">
    <property type="entry name" value="SAICAR_synt"/>
    <property type="match status" value="1"/>
</dbReference>
<dbReference type="SUPFAM" id="SSF56104">
    <property type="entry name" value="SAICAR synthase-like"/>
    <property type="match status" value="1"/>
</dbReference>
<dbReference type="PROSITE" id="PS01057">
    <property type="entry name" value="SAICAR_SYNTHETASE_1"/>
    <property type="match status" value="1"/>
</dbReference>
<dbReference type="PROSITE" id="PS01058">
    <property type="entry name" value="SAICAR_SYNTHETASE_2"/>
    <property type="match status" value="1"/>
</dbReference>